<sequence length="1842" mass="207096">MALRGPMKRSHLRQVSAPSVDSLSVPQSQSPEALYNDEHSHQDVHATPDERTIRLSSASLERRQCSLWVHDETFSREEILFNQAAFSDLRVNVGDVIEILPVRSPGDSIHSLKSDLGARSLRDSYLESGSAHLPDPMSKFKTPLQSRCLFVVKPLPQEIKARHPKLEISVTHSVANIFGFKNRTLVNISVVDRGQCSASHVDIAFRDQFLVRSDMWRLVMSELADKIIYKGQKIVFMGSIKATVKNIFIRGKKVLSGYFSPHTIPVFRSESAKYVLFIQMSREMWDFDSEGTGDILFSRVINGFLPELFKRWANSDAKHLVTIVLFTRVEYGSSALGDPLPLSSESLRCISSPNHVPTRDFYRVVVNDMASGHWTTILDELKKDFRTFLRDVSILKMDSPDTPTVDGVKVAPKNKPAIIAGRPSTALRGNILEAIHLASAHLAYDHIDRDMVHTGTSIIVITPGSGVFEVSYESLSSTSEALADRGIAIDLVCLSPMPLHSVPLFKYKAPVERSGSSSFGDFHSSGYSPEMRQSFSFASRTPHLSPKSTMQGSFPGMTHKEHLSARSNEWNYGIPHWLDISYWNPETYREARRIAKKDPNAPIPFTVTKQSKLFVPRVRMYEIQMMGVMESEQSDISIPYLLEGQGVSRTSNAGLGLSPSGLSSSRASFRRNSSYKAQLSDSLRPEPFLQSITNPKDVMLAKSKKTPNQVIAWMDQYDEAVFQPFAKRRQQRKASRPKRPSEPEVQVSNAHERLSARSVLRLREHETNSNSGDRSYPTRTIPRVSETSLSAPQGPVPSKTSSPKKPALKAPSAARTPRMSRTISFALLGFGATPPRAQASTEVNVEHARAQPTSGQKKPSVGFMDTRSVESFSGSDSASISTVIDTSLRPASPHPAPQKSAMTPTRPISIKVPPRQPSEDTEPVDRTVLPESYSTTSTAIPFTGDGRRDSRTKNGPRFELTVSGGSRESSIKSPQNKALAPWVRSINPCNTSRDVLRDTSWFGRWQHAYPRPPHVAVVKWKSLKSPAILPLTTEEFPTAQELGSDYLQTPYRVFPNDDPEGVEVPKTRGILLREMISLRLSHGFQIVIGKHVAEASGQPALETLNVFDTRSLERDGATVFLSKGNTIHRLICVDGGEIEVTRFTHRTSSTLAAGKRDDFSLYTPAMRTILSTEYELKNIKLDPTAEDYNWNYADNYVAGHRDYLFNPAQQLQFWRVRYVLIPMPLQVNNRRHLQSFNEDNEEEIHLLGINQLTHIWQRHRYVPPEEKRFESSNEKKDQNPLNIMYQTRNPSEVVAAELDRILLSDPGLDNSPAQLLPESELLERSSISLSSLAQIIQGEKGVRMMDRRWHWRLHYNCFIGFEFTTWLLQNFRDIDSREEAVQFGNELMKHGLFQHVEKRHNFRDGNYFYQISSEYRVARPESRGSWFPQKKSDKTVPSTAASENPRDSPVNGHSRSDSVETLPPHMPATPSKSKNKATIMLSKMMKYDVDPRKRSNRPEVIDLHYDRLHNPDNCFHIELSWMNTTPKLIEDTVLSWAATAEKFGLKLVQVPIAEGCAISRTQPFRKPYRVSLTVPPPPGPVPTVFNTATFSQLGSSDRHYYHKAMLRKFDFVLDFEARSAFPADVEVSYSWGTPDYQYPQYIHRSGSLLVQITDEGDFLFLANRLVSTRLAAATREGSRYERMDRPEHLRARASTYDPLDRISPRLSPLVRPLHDIGSPISPQGQPSIDSAHLYRAPEHILKSFEEFCNDAARLEQFYSVSHARPVSTKVGPAPTTLMDSSIPTLELPASVVSHHIHPPALMSRASVDGSIPSIDAMTRARNDSLSYKGSPKSGSLRPLNMT</sequence>
<gene>
    <name type="primary">iml1</name>
    <name type="ORF">NFIA_082130</name>
</gene>
<dbReference type="EMBL" id="DS027696">
    <property type="protein sequence ID" value="EAW18266.1"/>
    <property type="molecule type" value="Genomic_DNA"/>
</dbReference>
<dbReference type="RefSeq" id="XP_001260163.1">
    <property type="nucleotide sequence ID" value="XM_001260162.1"/>
</dbReference>
<dbReference type="SMR" id="A1DFV9"/>
<dbReference type="STRING" id="331117.A1DFV9"/>
<dbReference type="EnsemblFungi" id="EAW18266">
    <property type="protein sequence ID" value="EAW18266"/>
    <property type="gene ID" value="NFIA_082130"/>
</dbReference>
<dbReference type="GeneID" id="4586720"/>
<dbReference type="KEGG" id="nfi:NFIA_082130"/>
<dbReference type="VEuPathDB" id="FungiDB:NFIA_082130"/>
<dbReference type="eggNOG" id="KOG3572">
    <property type="taxonomic scope" value="Eukaryota"/>
</dbReference>
<dbReference type="HOGENOM" id="CLU_000935_1_1_1"/>
<dbReference type="OMA" id="SWMNATP"/>
<dbReference type="OrthoDB" id="39497at2759"/>
<dbReference type="Proteomes" id="UP000006702">
    <property type="component" value="Unassembled WGS sequence"/>
</dbReference>
<dbReference type="GO" id="GO:1990130">
    <property type="term" value="C:GATOR1 complex"/>
    <property type="evidence" value="ECO:0007669"/>
    <property type="project" value="TreeGrafter"/>
</dbReference>
<dbReference type="GO" id="GO:0005774">
    <property type="term" value="C:vacuolar membrane"/>
    <property type="evidence" value="ECO:0007669"/>
    <property type="project" value="UniProtKB-SubCell"/>
</dbReference>
<dbReference type="GO" id="GO:0005096">
    <property type="term" value="F:GTPase activator activity"/>
    <property type="evidence" value="ECO:0007669"/>
    <property type="project" value="InterPro"/>
</dbReference>
<dbReference type="GO" id="GO:0035556">
    <property type="term" value="P:intracellular signal transduction"/>
    <property type="evidence" value="ECO:0007669"/>
    <property type="project" value="InterPro"/>
</dbReference>
<dbReference type="GO" id="GO:1904262">
    <property type="term" value="P:negative regulation of TORC1 signaling"/>
    <property type="evidence" value="ECO:0007669"/>
    <property type="project" value="TreeGrafter"/>
</dbReference>
<dbReference type="GO" id="GO:0010508">
    <property type="term" value="P:positive regulation of autophagy"/>
    <property type="evidence" value="ECO:0007669"/>
    <property type="project" value="TreeGrafter"/>
</dbReference>
<dbReference type="CDD" id="cd04449">
    <property type="entry name" value="DEP_DEPDC5-like"/>
    <property type="match status" value="1"/>
</dbReference>
<dbReference type="FunFam" id="1.10.10.10:FF:001090">
    <property type="entry name" value="Vacuolar membrane-associated protein iml1"/>
    <property type="match status" value="1"/>
</dbReference>
<dbReference type="Gene3D" id="1.10.10.10">
    <property type="entry name" value="Winged helix-like DNA-binding domain superfamily/Winged helix DNA-binding domain"/>
    <property type="match status" value="1"/>
</dbReference>
<dbReference type="InterPro" id="IPR000591">
    <property type="entry name" value="DEP_dom"/>
</dbReference>
<dbReference type="InterPro" id="IPR045838">
    <property type="entry name" value="DEPDC5_CTD"/>
</dbReference>
<dbReference type="InterPro" id="IPR027244">
    <property type="entry name" value="IML1"/>
</dbReference>
<dbReference type="InterPro" id="IPR048255">
    <property type="entry name" value="IML1_N"/>
</dbReference>
<dbReference type="InterPro" id="IPR036388">
    <property type="entry name" value="WH-like_DNA-bd_sf"/>
</dbReference>
<dbReference type="InterPro" id="IPR036390">
    <property type="entry name" value="WH_DNA-bd_sf"/>
</dbReference>
<dbReference type="PANTHER" id="PTHR13179">
    <property type="entry name" value="DEP DOMAIN CONTAINING PROTEIN 5"/>
    <property type="match status" value="1"/>
</dbReference>
<dbReference type="PANTHER" id="PTHR13179:SF8">
    <property type="entry name" value="GATOR COMPLEX PROTEIN DEPDC5"/>
    <property type="match status" value="1"/>
</dbReference>
<dbReference type="Pfam" id="PF00610">
    <property type="entry name" value="DEP"/>
    <property type="match status" value="1"/>
</dbReference>
<dbReference type="Pfam" id="PF19418">
    <property type="entry name" value="DEPDC5_CTD"/>
    <property type="match status" value="1"/>
</dbReference>
<dbReference type="Pfam" id="PF12257">
    <property type="entry name" value="IML1"/>
    <property type="match status" value="1"/>
</dbReference>
<dbReference type="Pfam" id="PF24438">
    <property type="entry name" value="IML1_N_fung"/>
    <property type="match status" value="1"/>
</dbReference>
<dbReference type="SMART" id="SM00049">
    <property type="entry name" value="DEP"/>
    <property type="match status" value="1"/>
</dbReference>
<dbReference type="SUPFAM" id="SSF46785">
    <property type="entry name" value="Winged helix' DNA-binding domain"/>
    <property type="match status" value="1"/>
</dbReference>
<dbReference type="PROSITE" id="PS50186">
    <property type="entry name" value="DEP"/>
    <property type="match status" value="1"/>
</dbReference>
<name>IML1_NEOFI</name>
<feature type="chain" id="PRO_0000301775" description="Vacuolar membrane-associated protein iml1">
    <location>
        <begin position="1"/>
        <end position="1842"/>
    </location>
</feature>
<feature type="domain" description="DEP" evidence="2">
    <location>
        <begin position="1338"/>
        <end position="1413"/>
    </location>
</feature>
<feature type="region of interest" description="Disordered" evidence="3">
    <location>
        <begin position="1"/>
        <end position="49"/>
    </location>
</feature>
<feature type="region of interest" description="Disordered" evidence="3">
    <location>
        <begin position="728"/>
        <end position="817"/>
    </location>
</feature>
<feature type="region of interest" description="Disordered" evidence="3">
    <location>
        <begin position="887"/>
        <end position="976"/>
    </location>
</feature>
<feature type="region of interest" description="Disordered" evidence="3">
    <location>
        <begin position="1422"/>
        <end position="1475"/>
    </location>
</feature>
<feature type="region of interest" description="Disordered" evidence="3">
    <location>
        <begin position="1822"/>
        <end position="1842"/>
    </location>
</feature>
<feature type="compositionally biased region" description="Basic residues" evidence="3">
    <location>
        <begin position="1"/>
        <end position="12"/>
    </location>
</feature>
<feature type="compositionally biased region" description="Polar residues" evidence="3">
    <location>
        <begin position="16"/>
        <end position="31"/>
    </location>
</feature>
<feature type="compositionally biased region" description="Basic and acidic residues" evidence="3">
    <location>
        <begin position="36"/>
        <end position="49"/>
    </location>
</feature>
<feature type="compositionally biased region" description="Basic residues" evidence="3">
    <location>
        <begin position="728"/>
        <end position="738"/>
    </location>
</feature>
<feature type="compositionally biased region" description="Basic and acidic residues" evidence="3">
    <location>
        <begin position="750"/>
        <end position="767"/>
    </location>
</feature>
<feature type="compositionally biased region" description="Low complexity" evidence="3">
    <location>
        <begin position="797"/>
        <end position="814"/>
    </location>
</feature>
<feature type="compositionally biased region" description="Polar residues" evidence="3">
    <location>
        <begin position="963"/>
        <end position="976"/>
    </location>
</feature>
<protein>
    <recommendedName>
        <fullName>Vacuolar membrane-associated protein iml1</fullName>
    </recommendedName>
</protein>
<keyword id="KW-0472">Membrane</keyword>
<keyword id="KW-1185">Reference proteome</keyword>
<keyword id="KW-0926">Vacuole</keyword>
<reference key="1">
    <citation type="journal article" date="2008" name="PLoS Genet.">
        <title>Genomic islands in the pathogenic filamentous fungus Aspergillus fumigatus.</title>
        <authorList>
            <person name="Fedorova N.D."/>
            <person name="Khaldi N."/>
            <person name="Joardar V.S."/>
            <person name="Maiti R."/>
            <person name="Amedeo P."/>
            <person name="Anderson M.J."/>
            <person name="Crabtree J."/>
            <person name="Silva J.C."/>
            <person name="Badger J.H."/>
            <person name="Albarraq A."/>
            <person name="Angiuoli S."/>
            <person name="Bussey H."/>
            <person name="Bowyer P."/>
            <person name="Cotty P.J."/>
            <person name="Dyer P.S."/>
            <person name="Egan A."/>
            <person name="Galens K."/>
            <person name="Fraser-Liggett C.M."/>
            <person name="Haas B.J."/>
            <person name="Inman J.M."/>
            <person name="Kent R."/>
            <person name="Lemieux S."/>
            <person name="Malavazi I."/>
            <person name="Orvis J."/>
            <person name="Roemer T."/>
            <person name="Ronning C.M."/>
            <person name="Sundaram J.P."/>
            <person name="Sutton G."/>
            <person name="Turner G."/>
            <person name="Venter J.C."/>
            <person name="White O.R."/>
            <person name="Whitty B.R."/>
            <person name="Youngman P."/>
            <person name="Wolfe K.H."/>
            <person name="Goldman G.H."/>
            <person name="Wortman J.R."/>
            <person name="Jiang B."/>
            <person name="Denning D.W."/>
            <person name="Nierman W.C."/>
        </authorList>
    </citation>
    <scope>NUCLEOTIDE SEQUENCE [LARGE SCALE GENOMIC DNA]</scope>
    <source>
        <strain>ATCC 1020 / DSM 3700 / CBS 544.65 / FGSC A1164 / JCM 1740 / NRRL 181 / WB 181</strain>
    </source>
</reference>
<organism>
    <name type="scientific">Neosartorya fischeri (strain ATCC 1020 / DSM 3700 / CBS 544.65 / FGSC A1164 / JCM 1740 / NRRL 181 / WB 181)</name>
    <name type="common">Aspergillus fischerianus</name>
    <dbReference type="NCBI Taxonomy" id="331117"/>
    <lineage>
        <taxon>Eukaryota</taxon>
        <taxon>Fungi</taxon>
        <taxon>Dikarya</taxon>
        <taxon>Ascomycota</taxon>
        <taxon>Pezizomycotina</taxon>
        <taxon>Eurotiomycetes</taxon>
        <taxon>Eurotiomycetidae</taxon>
        <taxon>Eurotiales</taxon>
        <taxon>Aspergillaceae</taxon>
        <taxon>Aspergillus</taxon>
        <taxon>Aspergillus subgen. Fumigati</taxon>
    </lineage>
</organism>
<comment type="subcellular location">
    <subcellularLocation>
        <location evidence="1">Vacuole membrane</location>
        <topology evidence="1">Peripheral membrane protein</topology>
    </subcellularLocation>
</comment>
<comment type="similarity">
    <text evidence="4">Belongs to the IML1 family.</text>
</comment>
<proteinExistence type="inferred from homology"/>
<evidence type="ECO:0000250" key="1"/>
<evidence type="ECO:0000255" key="2">
    <source>
        <dbReference type="PROSITE-ProRule" id="PRU00066"/>
    </source>
</evidence>
<evidence type="ECO:0000256" key="3">
    <source>
        <dbReference type="SAM" id="MobiDB-lite"/>
    </source>
</evidence>
<evidence type="ECO:0000305" key="4"/>
<accession>A1DFV9</accession>